<reference key="1">
    <citation type="journal article" date="2009" name="PLoS Genet.">
        <title>Organised genome dynamics in the Escherichia coli species results in highly diverse adaptive paths.</title>
        <authorList>
            <person name="Touchon M."/>
            <person name="Hoede C."/>
            <person name="Tenaillon O."/>
            <person name="Barbe V."/>
            <person name="Baeriswyl S."/>
            <person name="Bidet P."/>
            <person name="Bingen E."/>
            <person name="Bonacorsi S."/>
            <person name="Bouchier C."/>
            <person name="Bouvet O."/>
            <person name="Calteau A."/>
            <person name="Chiapello H."/>
            <person name="Clermont O."/>
            <person name="Cruveiller S."/>
            <person name="Danchin A."/>
            <person name="Diard M."/>
            <person name="Dossat C."/>
            <person name="Karoui M.E."/>
            <person name="Frapy E."/>
            <person name="Garry L."/>
            <person name="Ghigo J.M."/>
            <person name="Gilles A.M."/>
            <person name="Johnson J."/>
            <person name="Le Bouguenec C."/>
            <person name="Lescat M."/>
            <person name="Mangenot S."/>
            <person name="Martinez-Jehanne V."/>
            <person name="Matic I."/>
            <person name="Nassif X."/>
            <person name="Oztas S."/>
            <person name="Petit M.A."/>
            <person name="Pichon C."/>
            <person name="Rouy Z."/>
            <person name="Ruf C.S."/>
            <person name="Schneider D."/>
            <person name="Tourret J."/>
            <person name="Vacherie B."/>
            <person name="Vallenet D."/>
            <person name="Medigue C."/>
            <person name="Rocha E.P.C."/>
            <person name="Denamur E."/>
        </authorList>
    </citation>
    <scope>NUCLEOTIDE SEQUENCE [LARGE SCALE GENOMIC DNA]</scope>
    <source>
        <strain>55989 / EAEC</strain>
    </source>
</reference>
<comment type="function">
    <text evidence="1">Transforms N(2)-succinylglutamate into succinate and glutamate.</text>
</comment>
<comment type="catalytic activity">
    <reaction evidence="1">
        <text>N-succinyl-L-glutamate + H2O = L-glutamate + succinate</text>
        <dbReference type="Rhea" id="RHEA:15169"/>
        <dbReference type="ChEBI" id="CHEBI:15377"/>
        <dbReference type="ChEBI" id="CHEBI:29985"/>
        <dbReference type="ChEBI" id="CHEBI:30031"/>
        <dbReference type="ChEBI" id="CHEBI:58763"/>
        <dbReference type="EC" id="3.5.1.96"/>
    </reaction>
</comment>
<comment type="cofactor">
    <cofactor evidence="1">
        <name>Zn(2+)</name>
        <dbReference type="ChEBI" id="CHEBI:29105"/>
    </cofactor>
    <text evidence="1">Binds 1 zinc ion per subunit.</text>
</comment>
<comment type="pathway">
    <text evidence="1">Amino-acid degradation; L-arginine degradation via AST pathway; L-glutamate and succinate from L-arginine: step 5/5.</text>
</comment>
<comment type="similarity">
    <text evidence="1">Belongs to the AspA/AstE family. Succinylglutamate desuccinylase subfamily.</text>
</comment>
<feature type="chain" id="PRO_1000148439" description="Succinylglutamate desuccinylase">
    <location>
        <begin position="1"/>
        <end position="322"/>
    </location>
</feature>
<feature type="active site" evidence="1">
    <location>
        <position position="210"/>
    </location>
</feature>
<feature type="binding site" evidence="1">
    <location>
        <position position="53"/>
    </location>
    <ligand>
        <name>Zn(2+)</name>
        <dbReference type="ChEBI" id="CHEBI:29105"/>
    </ligand>
</feature>
<feature type="binding site" evidence="1">
    <location>
        <position position="56"/>
    </location>
    <ligand>
        <name>Zn(2+)</name>
        <dbReference type="ChEBI" id="CHEBI:29105"/>
    </ligand>
</feature>
<feature type="binding site" evidence="1">
    <location>
        <position position="147"/>
    </location>
    <ligand>
        <name>Zn(2+)</name>
        <dbReference type="ChEBI" id="CHEBI:29105"/>
    </ligand>
</feature>
<evidence type="ECO:0000255" key="1">
    <source>
        <dbReference type="HAMAP-Rule" id="MF_00767"/>
    </source>
</evidence>
<keyword id="KW-0056">Arginine metabolism</keyword>
<keyword id="KW-0378">Hydrolase</keyword>
<keyword id="KW-0479">Metal-binding</keyword>
<keyword id="KW-1185">Reference proteome</keyword>
<keyword id="KW-0862">Zinc</keyword>
<name>ASTE_ECO55</name>
<protein>
    <recommendedName>
        <fullName evidence="1">Succinylglutamate desuccinylase</fullName>
        <ecNumber evidence="1">3.5.1.96</ecNumber>
    </recommendedName>
</protein>
<proteinExistence type="inferred from homology"/>
<dbReference type="EC" id="3.5.1.96" evidence="1"/>
<dbReference type="EMBL" id="CU928145">
    <property type="protein sequence ID" value="CAU97771.1"/>
    <property type="molecule type" value="Genomic_DNA"/>
</dbReference>
<dbReference type="RefSeq" id="WP_000368485.1">
    <property type="nucleotide sequence ID" value="NC_011748.1"/>
</dbReference>
<dbReference type="SMR" id="B7L6L8"/>
<dbReference type="KEGG" id="eck:EC55989_1912"/>
<dbReference type="HOGENOM" id="CLU_071608_0_0_6"/>
<dbReference type="UniPathway" id="UPA00185">
    <property type="reaction ID" value="UER00283"/>
</dbReference>
<dbReference type="Proteomes" id="UP000000746">
    <property type="component" value="Chromosome"/>
</dbReference>
<dbReference type="GO" id="GO:0016788">
    <property type="term" value="F:hydrolase activity, acting on ester bonds"/>
    <property type="evidence" value="ECO:0007669"/>
    <property type="project" value="UniProtKB-UniRule"/>
</dbReference>
<dbReference type="GO" id="GO:0009017">
    <property type="term" value="F:succinylglutamate desuccinylase activity"/>
    <property type="evidence" value="ECO:0007669"/>
    <property type="project" value="UniProtKB-EC"/>
</dbReference>
<dbReference type="GO" id="GO:0008270">
    <property type="term" value="F:zinc ion binding"/>
    <property type="evidence" value="ECO:0007669"/>
    <property type="project" value="UniProtKB-UniRule"/>
</dbReference>
<dbReference type="GO" id="GO:0019544">
    <property type="term" value="P:arginine catabolic process to glutamate"/>
    <property type="evidence" value="ECO:0007669"/>
    <property type="project" value="UniProtKB-UniRule"/>
</dbReference>
<dbReference type="GO" id="GO:0019545">
    <property type="term" value="P:arginine catabolic process to succinate"/>
    <property type="evidence" value="ECO:0007669"/>
    <property type="project" value="UniProtKB-UniRule"/>
</dbReference>
<dbReference type="CDD" id="cd03855">
    <property type="entry name" value="M14_ASTE"/>
    <property type="match status" value="1"/>
</dbReference>
<dbReference type="FunFam" id="3.40.630.10:FF:000017">
    <property type="entry name" value="Succinylglutamate desuccinylase"/>
    <property type="match status" value="1"/>
</dbReference>
<dbReference type="Gene3D" id="3.40.630.10">
    <property type="entry name" value="Zn peptidases"/>
    <property type="match status" value="1"/>
</dbReference>
<dbReference type="HAMAP" id="MF_00767">
    <property type="entry name" value="Arg_catab_AstE"/>
    <property type="match status" value="1"/>
</dbReference>
<dbReference type="InterPro" id="IPR050178">
    <property type="entry name" value="AspA/AstE_fam"/>
</dbReference>
<dbReference type="InterPro" id="IPR055438">
    <property type="entry name" value="AstE_AspA_cat"/>
</dbReference>
<dbReference type="InterPro" id="IPR007036">
    <property type="entry name" value="Aste_AspA_hybrid_dom"/>
</dbReference>
<dbReference type="InterPro" id="IPR016681">
    <property type="entry name" value="SuccinylGlu_desuccinylase"/>
</dbReference>
<dbReference type="NCBIfam" id="TIGR03242">
    <property type="entry name" value="arg_catab_astE"/>
    <property type="match status" value="1"/>
</dbReference>
<dbReference type="NCBIfam" id="NF003706">
    <property type="entry name" value="PRK05324.1"/>
    <property type="match status" value="1"/>
</dbReference>
<dbReference type="PANTHER" id="PTHR15162">
    <property type="entry name" value="ASPARTOACYLASE"/>
    <property type="match status" value="1"/>
</dbReference>
<dbReference type="PANTHER" id="PTHR15162:SF7">
    <property type="entry name" value="SUCCINYLGLUTAMATE DESUCCINYLASE"/>
    <property type="match status" value="1"/>
</dbReference>
<dbReference type="Pfam" id="PF24827">
    <property type="entry name" value="AstE_AspA_cat"/>
    <property type="match status" value="1"/>
</dbReference>
<dbReference type="Pfam" id="PF04952">
    <property type="entry name" value="AstE_AspA_hybrid"/>
    <property type="match status" value="1"/>
</dbReference>
<dbReference type="PIRSF" id="PIRSF017020">
    <property type="entry name" value="AstE"/>
    <property type="match status" value="1"/>
</dbReference>
<dbReference type="SUPFAM" id="SSF53187">
    <property type="entry name" value="Zn-dependent exopeptidases"/>
    <property type="match status" value="1"/>
</dbReference>
<sequence>MDNFLALTLTGKKPVITEREINGVRWRWLGDGVLELTPLTPPQGALVISAGIHGNETAPVEMLDALLGAISHGEIPLRWRLLVILGNPPALKKGKRYCHSDMNRMFGGRWQLFAESGETCRARELEQCLEDFYDLGKESVRWHLDLHTAIRGSLHPQFGVLPQRDIPWDEKFLTWLGAAGLEALVFHQEPGGTFTHFSARHFGALACTLELGKALPFGQNDLRQFAVTASAIAALLSGESVGIVRTPPLRYRVVSQITRHSPSFEMHMASDTLNFMPFEKGTLLAQDGEERFTVTHDVEYVLFPNPLVALGLRAGLMLEKIS</sequence>
<accession>B7L6L8</accession>
<gene>
    <name evidence="1" type="primary">astE</name>
    <name type="ordered locus">EC55989_1912</name>
</gene>
<organism>
    <name type="scientific">Escherichia coli (strain 55989 / EAEC)</name>
    <dbReference type="NCBI Taxonomy" id="585055"/>
    <lineage>
        <taxon>Bacteria</taxon>
        <taxon>Pseudomonadati</taxon>
        <taxon>Pseudomonadota</taxon>
        <taxon>Gammaproteobacteria</taxon>
        <taxon>Enterobacterales</taxon>
        <taxon>Enterobacteriaceae</taxon>
        <taxon>Escherichia</taxon>
    </lineage>
</organism>